<sequence>MSASASSLSAFNPKSLPLCVSRPASVSVLPPSLSFKLHSDHLVSIFASSALKCSSPAEYPSRFVRNVAVSSDFEVEEDDMFADGDDSAPVERNSFSPDLKLFVGNLSFNVDSAQLAQLFESAGNVEMVEVIYDKVTGRSRGFGFVTMSTAAEVEAAAQQFNGYEFEGRPLRVNAGPPPPKREESFSRGPRSGGYGSERGGGYGSERGGGYGSERGGGYGSERGGGYGSQRSGGGYGGSQRSSYGSGSGSGSGSGSGNRLYVGNLSWGVDDMALENLFNEQGKVVEARVIYDRDSGRSKGFGFVTLSSSQEVQKAINSLNGADLDGRQIRVSEAEARPPRGQF</sequence>
<gene>
    <name evidence="7" type="primary">CP29A</name>
    <name type="synonym">RBP29</name>
    <name type="ordered locus">At3g53460</name>
    <name type="ORF">F4P12_160</name>
</gene>
<feature type="transit peptide" description="Chloroplast" evidence="3">
    <location>
        <begin position="1"/>
        <end position="65"/>
    </location>
</feature>
<feature type="chain" id="PRO_0000031020" description="29 kDa ribonucleoprotein, chloroplastic">
    <location>
        <begin position="66"/>
        <end position="342"/>
    </location>
</feature>
<feature type="domain" description="RRM 1" evidence="4">
    <location>
        <begin position="99"/>
        <end position="177"/>
    </location>
</feature>
<feature type="domain" description="RRM 2" evidence="4">
    <location>
        <begin position="257"/>
        <end position="335"/>
    </location>
</feature>
<feature type="region of interest" description="Disordered" evidence="5">
    <location>
        <begin position="167"/>
        <end position="255"/>
    </location>
</feature>
<feature type="region of interest" description="Linker (Gly-rich)">
    <location>
        <begin position="178"/>
        <end position="256"/>
    </location>
</feature>
<feature type="compositionally biased region" description="Gly residues" evidence="5">
    <location>
        <begin position="190"/>
        <end position="237"/>
    </location>
</feature>
<feature type="compositionally biased region" description="Gly residues" evidence="5">
    <location>
        <begin position="245"/>
        <end position="255"/>
    </location>
</feature>
<feature type="modified residue" description="Phosphoserine" evidence="2">
    <location>
        <position position="107"/>
    </location>
</feature>
<feature type="modified residue" description="Phosphoserine" evidence="1">
    <location>
        <position position="204"/>
    </location>
</feature>
<feature type="splice variant" id="VSP_009110" description="In isoform 2." evidence="8">
    <location>
        <begin position="220"/>
        <end position="227"/>
    </location>
</feature>
<protein>
    <recommendedName>
        <fullName>29 kDa ribonucleoprotein, chloroplastic</fullName>
    </recommendedName>
    <alternativeName>
        <fullName evidence="7">RNA-binding protein CP29A</fullName>
    </alternativeName>
    <alternativeName>
        <fullName>RNA-binding protein cp29</fullName>
    </alternativeName>
</protein>
<organism>
    <name type="scientific">Arabidopsis thaliana</name>
    <name type="common">Mouse-ear cress</name>
    <dbReference type="NCBI Taxonomy" id="3702"/>
    <lineage>
        <taxon>Eukaryota</taxon>
        <taxon>Viridiplantae</taxon>
        <taxon>Streptophyta</taxon>
        <taxon>Embryophyta</taxon>
        <taxon>Tracheophyta</taxon>
        <taxon>Spermatophyta</taxon>
        <taxon>Magnoliopsida</taxon>
        <taxon>eudicotyledons</taxon>
        <taxon>Gunneridae</taxon>
        <taxon>Pentapetalae</taxon>
        <taxon>rosids</taxon>
        <taxon>malvids</taxon>
        <taxon>Brassicales</taxon>
        <taxon>Brassicaceae</taxon>
        <taxon>Camelineae</taxon>
        <taxon>Arabidopsis</taxon>
    </lineage>
</organism>
<proteinExistence type="evidence at transcript level"/>
<comment type="function">
    <text evidence="6">Stabilizes specific chloroplast mRNAs. Required for normal chloroplast development under cold stress conditions by stabilizing transcripts of numerous mRNAs under these conditions.</text>
</comment>
<comment type="subcellular location">
    <subcellularLocation>
        <location evidence="9">Plastid</location>
        <location evidence="9">Chloroplast</location>
    </subcellularLocation>
</comment>
<comment type="alternative products">
    <event type="alternative splicing"/>
    <isoform>
        <id>Q43349-1</id>
        <name>1</name>
        <sequence type="displayed"/>
    </isoform>
    <isoform>
        <id>Q43349-2</id>
        <name>2</name>
        <sequence type="described" ref="VSP_009110"/>
    </isoform>
</comment>
<comment type="disruption phenotype">
    <text evidence="6">No visible phenotype under normal growth conditions, but mutant plants exhibit increased sensitivity to cold stress.</text>
</comment>
<name>CP29A_ARATH</name>
<keyword id="KW-0025">Alternative splicing</keyword>
<keyword id="KW-0150">Chloroplast</keyword>
<keyword id="KW-0507">mRNA processing</keyword>
<keyword id="KW-0597">Phosphoprotein</keyword>
<keyword id="KW-0934">Plastid</keyword>
<keyword id="KW-1185">Reference proteome</keyword>
<keyword id="KW-0677">Repeat</keyword>
<keyword id="KW-0687">Ribonucleoprotein</keyword>
<keyword id="KW-0694">RNA-binding</keyword>
<keyword id="KW-0809">Transit peptide</keyword>
<accession>Q43349</accession>
<accession>Q94BT1</accession>
<accession>Q9LFH2</accession>
<evidence type="ECO:0000250" key="1">
    <source>
        <dbReference type="UniProtKB" id="Q03250"/>
    </source>
</evidence>
<evidence type="ECO:0000250" key="2">
    <source>
        <dbReference type="UniProtKB" id="Q8RWN5"/>
    </source>
</evidence>
<evidence type="ECO:0000255" key="3"/>
<evidence type="ECO:0000255" key="4">
    <source>
        <dbReference type="PROSITE-ProRule" id="PRU00176"/>
    </source>
</evidence>
<evidence type="ECO:0000256" key="5">
    <source>
        <dbReference type="SAM" id="MobiDB-lite"/>
    </source>
</evidence>
<evidence type="ECO:0000269" key="6">
    <source>
    </source>
</evidence>
<evidence type="ECO:0000303" key="7">
    <source>
    </source>
</evidence>
<evidence type="ECO:0000303" key="8">
    <source>
    </source>
</evidence>
<evidence type="ECO:0000305" key="9"/>
<dbReference type="EMBL" id="D31710">
    <property type="protein sequence ID" value="BAA06518.1"/>
    <property type="molecule type" value="Genomic_DNA"/>
</dbReference>
<dbReference type="EMBL" id="D31711">
    <property type="protein sequence ID" value="BAA06519.1"/>
    <property type="molecule type" value="mRNA"/>
</dbReference>
<dbReference type="EMBL" id="AL132966">
    <property type="protein sequence ID" value="CAB67653.1"/>
    <property type="molecule type" value="Genomic_DNA"/>
</dbReference>
<dbReference type="EMBL" id="CP002686">
    <property type="protein sequence ID" value="AEE79089.1"/>
    <property type="molecule type" value="Genomic_DNA"/>
</dbReference>
<dbReference type="EMBL" id="CP002686">
    <property type="protein sequence ID" value="AEE79090.1"/>
    <property type="molecule type" value="Genomic_DNA"/>
</dbReference>
<dbReference type="EMBL" id="CP002686">
    <property type="protein sequence ID" value="AEE79091.1"/>
    <property type="molecule type" value="Genomic_DNA"/>
</dbReference>
<dbReference type="EMBL" id="AY039909">
    <property type="protein sequence ID" value="AAK64013.1"/>
    <property type="molecule type" value="mRNA"/>
</dbReference>
<dbReference type="EMBL" id="AY077674">
    <property type="protein sequence ID" value="AAL76152.1"/>
    <property type="molecule type" value="mRNA"/>
</dbReference>
<dbReference type="EMBL" id="AY087840">
    <property type="protein sequence ID" value="AAM65393.1"/>
    <property type="molecule type" value="mRNA"/>
</dbReference>
<dbReference type="PIR" id="S53490">
    <property type="entry name" value="S53490"/>
</dbReference>
<dbReference type="PIR" id="T45886">
    <property type="entry name" value="T45886"/>
</dbReference>
<dbReference type="RefSeq" id="NP_001190078.1">
    <molecule id="Q43349-1"/>
    <property type="nucleotide sequence ID" value="NM_001203149.1"/>
</dbReference>
<dbReference type="RefSeq" id="NP_190914.1">
    <molecule id="Q43349-1"/>
    <property type="nucleotide sequence ID" value="NM_115206.3"/>
</dbReference>
<dbReference type="RefSeq" id="NP_850692.2">
    <molecule id="Q43349-1"/>
    <property type="nucleotide sequence ID" value="NM_180361.2"/>
</dbReference>
<dbReference type="SASBDB" id="Q43349"/>
<dbReference type="SMR" id="Q43349"/>
<dbReference type="BioGRID" id="9831">
    <property type="interactions" value="2"/>
</dbReference>
<dbReference type="FunCoup" id="Q43349">
    <property type="interactions" value="1184"/>
</dbReference>
<dbReference type="IntAct" id="Q43349">
    <property type="interactions" value="1"/>
</dbReference>
<dbReference type="STRING" id="3702.Q43349"/>
<dbReference type="iPTMnet" id="Q43349"/>
<dbReference type="PaxDb" id="3702-AT3G53460.4"/>
<dbReference type="ProteomicsDB" id="222762">
    <molecule id="Q43349-1"/>
</dbReference>
<dbReference type="EnsemblPlants" id="AT3G53460.1">
    <molecule id="Q43349-1"/>
    <property type="protein sequence ID" value="AT3G53460.1"/>
    <property type="gene ID" value="AT3G53460"/>
</dbReference>
<dbReference type="EnsemblPlants" id="AT3G53460.2">
    <molecule id="Q43349-1"/>
    <property type="protein sequence ID" value="AT3G53460.2"/>
    <property type="gene ID" value="AT3G53460"/>
</dbReference>
<dbReference type="EnsemblPlants" id="AT3G53460.3">
    <molecule id="Q43349-1"/>
    <property type="protein sequence ID" value="AT3G53460.3"/>
    <property type="gene ID" value="AT3G53460"/>
</dbReference>
<dbReference type="Gramene" id="AT3G53460.1">
    <molecule id="Q43349-1"/>
    <property type="protein sequence ID" value="AT3G53460.1"/>
    <property type="gene ID" value="AT3G53460"/>
</dbReference>
<dbReference type="Gramene" id="AT3G53460.2">
    <molecule id="Q43349-1"/>
    <property type="protein sequence ID" value="AT3G53460.2"/>
    <property type="gene ID" value="AT3G53460"/>
</dbReference>
<dbReference type="Gramene" id="AT3G53460.3">
    <molecule id="Q43349-1"/>
    <property type="protein sequence ID" value="AT3G53460.3"/>
    <property type="gene ID" value="AT3G53460"/>
</dbReference>
<dbReference type="KEGG" id="ath:AT3G53460"/>
<dbReference type="Araport" id="AT3G53460"/>
<dbReference type="TAIR" id="AT3G53460">
    <property type="gene designation" value="CP29"/>
</dbReference>
<dbReference type="eggNOG" id="KOG0118">
    <property type="taxonomic scope" value="Eukaryota"/>
</dbReference>
<dbReference type="HOGENOM" id="CLU_012062_15_1_1"/>
<dbReference type="InParanoid" id="Q43349"/>
<dbReference type="OMA" id="SNLAWGV"/>
<dbReference type="OrthoDB" id="439808at2759"/>
<dbReference type="PhylomeDB" id="Q43349"/>
<dbReference type="CD-CODE" id="4299E36E">
    <property type="entry name" value="Nucleolus"/>
</dbReference>
<dbReference type="PRO" id="PR:Q43349"/>
<dbReference type="Proteomes" id="UP000006548">
    <property type="component" value="Chromosome 3"/>
</dbReference>
<dbReference type="ExpressionAtlas" id="Q43349">
    <property type="expression patterns" value="baseline and differential"/>
</dbReference>
<dbReference type="GO" id="GO:0009507">
    <property type="term" value="C:chloroplast"/>
    <property type="evidence" value="ECO:0007669"/>
    <property type="project" value="UniProtKB-SubCell"/>
</dbReference>
<dbReference type="GO" id="GO:1990904">
    <property type="term" value="C:ribonucleoprotein complex"/>
    <property type="evidence" value="ECO:0007669"/>
    <property type="project" value="UniProtKB-KW"/>
</dbReference>
<dbReference type="GO" id="GO:0003723">
    <property type="term" value="F:RNA binding"/>
    <property type="evidence" value="ECO:0007669"/>
    <property type="project" value="UniProtKB-KW"/>
</dbReference>
<dbReference type="GO" id="GO:0009631">
    <property type="term" value="P:cold acclimation"/>
    <property type="evidence" value="ECO:0000315"/>
    <property type="project" value="UniProtKB"/>
</dbReference>
<dbReference type="GO" id="GO:0006397">
    <property type="term" value="P:mRNA processing"/>
    <property type="evidence" value="ECO:0007669"/>
    <property type="project" value="UniProtKB-KW"/>
</dbReference>
<dbReference type="GO" id="GO:0043489">
    <property type="term" value="P:RNA stabilization"/>
    <property type="evidence" value="ECO:0000315"/>
    <property type="project" value="UniProtKB"/>
</dbReference>
<dbReference type="CDD" id="cd21608">
    <property type="entry name" value="RRM2_NsCP33_like"/>
    <property type="match status" value="1"/>
</dbReference>
<dbReference type="FunFam" id="3.30.70.330:FF:002093">
    <property type="match status" value="1"/>
</dbReference>
<dbReference type="FunFam" id="3.30.70.330:FF:000423">
    <property type="entry name" value="Ribonucleoprotein A, chloroplastic"/>
    <property type="match status" value="1"/>
</dbReference>
<dbReference type="Gene3D" id="3.30.70.330">
    <property type="match status" value="2"/>
</dbReference>
<dbReference type="InterPro" id="IPR050502">
    <property type="entry name" value="Euk_RNA-bind_prot"/>
</dbReference>
<dbReference type="InterPro" id="IPR012677">
    <property type="entry name" value="Nucleotide-bd_a/b_plait_sf"/>
</dbReference>
<dbReference type="InterPro" id="IPR035979">
    <property type="entry name" value="RBD_domain_sf"/>
</dbReference>
<dbReference type="InterPro" id="IPR048289">
    <property type="entry name" value="RRM2_NsCP33-like"/>
</dbReference>
<dbReference type="InterPro" id="IPR000504">
    <property type="entry name" value="RRM_dom"/>
</dbReference>
<dbReference type="PANTHER" id="PTHR48025:SF24">
    <property type="entry name" value="29 KDA RIBONUCLEOPROTEIN, CHLOROPLASTIC"/>
    <property type="match status" value="1"/>
</dbReference>
<dbReference type="PANTHER" id="PTHR48025">
    <property type="entry name" value="OS02G0815200 PROTEIN"/>
    <property type="match status" value="1"/>
</dbReference>
<dbReference type="Pfam" id="PF00076">
    <property type="entry name" value="RRM_1"/>
    <property type="match status" value="2"/>
</dbReference>
<dbReference type="SMART" id="SM00360">
    <property type="entry name" value="RRM"/>
    <property type="match status" value="2"/>
</dbReference>
<dbReference type="SUPFAM" id="SSF54928">
    <property type="entry name" value="RNA-binding domain, RBD"/>
    <property type="match status" value="2"/>
</dbReference>
<dbReference type="PROSITE" id="PS50102">
    <property type="entry name" value="RRM"/>
    <property type="match status" value="2"/>
</dbReference>
<reference key="1">
    <citation type="journal article" date="1995" name="Plant Mol. Biol.">
        <title>Three types of nuclear genes encoding chloroplast RNA-binding proteins (cp29, cp31 and cp33) are present in Arabidopsis thaliana: presence of cp31 in chloroplasts and its homologue in nuclei/cytoplasms.</title>
        <authorList>
            <person name="Ohta M."/>
            <person name="Sugita M."/>
            <person name="Sugiura M."/>
        </authorList>
    </citation>
    <scope>NUCLEOTIDE SEQUENCE [GENOMIC DNA / MRNA] (ISOFORM 2)</scope>
    <source>
        <strain>cv. Columbia</strain>
        <tissue>Leaf</tissue>
    </source>
</reference>
<reference key="2">
    <citation type="journal article" date="2000" name="Nature">
        <title>Sequence and analysis of chromosome 3 of the plant Arabidopsis thaliana.</title>
        <authorList>
            <person name="Salanoubat M."/>
            <person name="Lemcke K."/>
            <person name="Rieger M."/>
            <person name="Ansorge W."/>
            <person name="Unseld M."/>
            <person name="Fartmann B."/>
            <person name="Valle G."/>
            <person name="Bloecker H."/>
            <person name="Perez-Alonso M."/>
            <person name="Obermaier B."/>
            <person name="Delseny M."/>
            <person name="Boutry M."/>
            <person name="Grivell L.A."/>
            <person name="Mache R."/>
            <person name="Puigdomenech P."/>
            <person name="De Simone V."/>
            <person name="Choisne N."/>
            <person name="Artiguenave F."/>
            <person name="Robert C."/>
            <person name="Brottier P."/>
            <person name="Wincker P."/>
            <person name="Cattolico L."/>
            <person name="Weissenbach J."/>
            <person name="Saurin W."/>
            <person name="Quetier F."/>
            <person name="Schaefer M."/>
            <person name="Mueller-Auer S."/>
            <person name="Gabel C."/>
            <person name="Fuchs M."/>
            <person name="Benes V."/>
            <person name="Wurmbach E."/>
            <person name="Drzonek H."/>
            <person name="Erfle H."/>
            <person name="Jordan N."/>
            <person name="Bangert S."/>
            <person name="Wiedelmann R."/>
            <person name="Kranz H."/>
            <person name="Voss H."/>
            <person name="Holland R."/>
            <person name="Brandt P."/>
            <person name="Nyakatura G."/>
            <person name="Vezzi A."/>
            <person name="D'Angelo M."/>
            <person name="Pallavicini A."/>
            <person name="Toppo S."/>
            <person name="Simionati B."/>
            <person name="Conrad A."/>
            <person name="Hornischer K."/>
            <person name="Kauer G."/>
            <person name="Loehnert T.-H."/>
            <person name="Nordsiek G."/>
            <person name="Reichelt J."/>
            <person name="Scharfe M."/>
            <person name="Schoen O."/>
            <person name="Bargues M."/>
            <person name="Terol J."/>
            <person name="Climent J."/>
            <person name="Navarro P."/>
            <person name="Collado C."/>
            <person name="Perez-Perez A."/>
            <person name="Ottenwaelder B."/>
            <person name="Duchemin D."/>
            <person name="Cooke R."/>
            <person name="Laudie M."/>
            <person name="Berger-Llauro C."/>
            <person name="Purnelle B."/>
            <person name="Masuy D."/>
            <person name="de Haan M."/>
            <person name="Maarse A.C."/>
            <person name="Alcaraz J.-P."/>
            <person name="Cottet A."/>
            <person name="Casacuberta E."/>
            <person name="Monfort A."/>
            <person name="Argiriou A."/>
            <person name="Flores M."/>
            <person name="Liguori R."/>
            <person name="Vitale D."/>
            <person name="Mannhaupt G."/>
            <person name="Haase D."/>
            <person name="Schoof H."/>
            <person name="Rudd S."/>
            <person name="Zaccaria P."/>
            <person name="Mewes H.-W."/>
            <person name="Mayer K.F.X."/>
            <person name="Kaul S."/>
            <person name="Town C.D."/>
            <person name="Koo H.L."/>
            <person name="Tallon L.J."/>
            <person name="Jenkins J."/>
            <person name="Rooney T."/>
            <person name="Rizzo M."/>
            <person name="Walts A."/>
            <person name="Utterback T."/>
            <person name="Fujii C.Y."/>
            <person name="Shea T.P."/>
            <person name="Creasy T.H."/>
            <person name="Haas B."/>
            <person name="Maiti R."/>
            <person name="Wu D."/>
            <person name="Peterson J."/>
            <person name="Van Aken S."/>
            <person name="Pai G."/>
            <person name="Militscher J."/>
            <person name="Sellers P."/>
            <person name="Gill J.E."/>
            <person name="Feldblyum T.V."/>
            <person name="Preuss D."/>
            <person name="Lin X."/>
            <person name="Nierman W.C."/>
            <person name="Salzberg S.L."/>
            <person name="White O."/>
            <person name="Venter J.C."/>
            <person name="Fraser C.M."/>
            <person name="Kaneko T."/>
            <person name="Nakamura Y."/>
            <person name="Sato S."/>
            <person name="Kato T."/>
            <person name="Asamizu E."/>
            <person name="Sasamoto S."/>
            <person name="Kimura T."/>
            <person name="Idesawa K."/>
            <person name="Kawashima K."/>
            <person name="Kishida Y."/>
            <person name="Kiyokawa C."/>
            <person name="Kohara M."/>
            <person name="Matsumoto M."/>
            <person name="Matsuno A."/>
            <person name="Muraki A."/>
            <person name="Nakayama S."/>
            <person name="Nakazaki N."/>
            <person name="Shinpo S."/>
            <person name="Takeuchi C."/>
            <person name="Wada T."/>
            <person name="Watanabe A."/>
            <person name="Yamada M."/>
            <person name="Yasuda M."/>
            <person name="Tabata S."/>
        </authorList>
    </citation>
    <scope>NUCLEOTIDE SEQUENCE [LARGE SCALE GENOMIC DNA]</scope>
    <source>
        <strain>cv. Columbia</strain>
    </source>
</reference>
<reference key="3">
    <citation type="journal article" date="2017" name="Plant J.">
        <title>Araport11: a complete reannotation of the Arabidopsis thaliana reference genome.</title>
        <authorList>
            <person name="Cheng C.Y."/>
            <person name="Krishnakumar V."/>
            <person name="Chan A.P."/>
            <person name="Thibaud-Nissen F."/>
            <person name="Schobel S."/>
            <person name="Town C.D."/>
        </authorList>
    </citation>
    <scope>GENOME REANNOTATION</scope>
    <source>
        <strain>cv. Columbia</strain>
    </source>
</reference>
<reference key="4">
    <citation type="journal article" date="2003" name="Science">
        <title>Empirical analysis of transcriptional activity in the Arabidopsis genome.</title>
        <authorList>
            <person name="Yamada K."/>
            <person name="Lim J."/>
            <person name="Dale J.M."/>
            <person name="Chen H."/>
            <person name="Shinn P."/>
            <person name="Palm C.J."/>
            <person name="Southwick A.M."/>
            <person name="Wu H.C."/>
            <person name="Kim C.J."/>
            <person name="Nguyen M."/>
            <person name="Pham P.K."/>
            <person name="Cheuk R.F."/>
            <person name="Karlin-Newmann G."/>
            <person name="Liu S.X."/>
            <person name="Lam B."/>
            <person name="Sakano H."/>
            <person name="Wu T."/>
            <person name="Yu G."/>
            <person name="Miranda M."/>
            <person name="Quach H.L."/>
            <person name="Tripp M."/>
            <person name="Chang C.H."/>
            <person name="Lee J.M."/>
            <person name="Toriumi M.J."/>
            <person name="Chan M.M."/>
            <person name="Tang C.C."/>
            <person name="Onodera C.S."/>
            <person name="Deng J.M."/>
            <person name="Akiyama K."/>
            <person name="Ansari Y."/>
            <person name="Arakawa T."/>
            <person name="Banh J."/>
            <person name="Banno F."/>
            <person name="Bowser L."/>
            <person name="Brooks S.Y."/>
            <person name="Carninci P."/>
            <person name="Chao Q."/>
            <person name="Choy N."/>
            <person name="Enju A."/>
            <person name="Goldsmith A.D."/>
            <person name="Gurjal M."/>
            <person name="Hansen N.F."/>
            <person name="Hayashizaki Y."/>
            <person name="Johnson-Hopson C."/>
            <person name="Hsuan V.W."/>
            <person name="Iida K."/>
            <person name="Karnes M."/>
            <person name="Khan S."/>
            <person name="Koesema E."/>
            <person name="Ishida J."/>
            <person name="Jiang P.X."/>
            <person name="Jones T."/>
            <person name="Kawai J."/>
            <person name="Kamiya A."/>
            <person name="Meyers C."/>
            <person name="Nakajima M."/>
            <person name="Narusaka M."/>
            <person name="Seki M."/>
            <person name="Sakurai T."/>
            <person name="Satou M."/>
            <person name="Tamse R."/>
            <person name="Vaysberg M."/>
            <person name="Wallender E.K."/>
            <person name="Wong C."/>
            <person name="Yamamura Y."/>
            <person name="Yuan S."/>
            <person name="Shinozaki K."/>
            <person name="Davis R.W."/>
            <person name="Theologis A."/>
            <person name="Ecker J.R."/>
        </authorList>
    </citation>
    <scope>NUCLEOTIDE SEQUENCE [LARGE SCALE MRNA] (ISOFORM 1)</scope>
    <source>
        <strain>cv. Columbia</strain>
    </source>
</reference>
<reference key="5">
    <citation type="submission" date="2002-03" db="EMBL/GenBank/DDBJ databases">
        <title>Full-length cDNA from Arabidopsis thaliana.</title>
        <authorList>
            <person name="Brover V.V."/>
            <person name="Troukhan M.E."/>
            <person name="Alexandrov N.A."/>
            <person name="Lu Y.-P."/>
            <person name="Flavell R.B."/>
            <person name="Feldmann K.A."/>
        </authorList>
    </citation>
    <scope>NUCLEOTIDE SEQUENCE [LARGE SCALE MRNA] (ISOFORM 1)</scope>
</reference>
<reference key="6">
    <citation type="journal article" date="2012" name="Plant Cell">
        <title>Arabidopsis chloroplast RNA binding proteins CP31A and CP29A associate with large transcript pools and confer cold stress tolerance by influencing multiple chloroplast RNA processing steps.</title>
        <authorList>
            <person name="Kupsch C."/>
            <person name="Ruwe H."/>
            <person name="Gusewski S."/>
            <person name="Tillich M."/>
            <person name="Small I."/>
            <person name="Schmitz-Linneweber C."/>
        </authorList>
    </citation>
    <scope>FUNCTION</scope>
    <scope>DISRUPTION PHENOTYPE</scope>
</reference>